<proteinExistence type="inferred from homology"/>
<evidence type="ECO:0000255" key="1">
    <source>
        <dbReference type="HAMAP-Rule" id="MF_01198"/>
    </source>
</evidence>
<evidence type="ECO:0000305" key="2"/>
<keyword id="KW-0175">Coiled coil</keyword>
<keyword id="KW-0963">Cytoplasm</keyword>
<keyword id="KW-1185">Reference proteome</keyword>
<keyword id="KW-0346">Stress response</keyword>
<comment type="function">
    <text evidence="1">Inhibits RpoS proteolysis by regulating RssB activity, thereby increasing the stability of the sigma stress factor RpoS especially during phosphate starvation, but also in stationary phase and during nitrogen starvation. Its effect on RpoS stability is due to its interaction with RssB, which probably blocks the interaction of RssB with RpoS, and the consequent delivery of the RssB-RpoS complex to the ClpXP protein degradation pathway.</text>
</comment>
<comment type="subunit">
    <text evidence="1">Interacts with RssB.</text>
</comment>
<comment type="subcellular location">
    <subcellularLocation>
        <location evidence="1">Cytoplasm</location>
    </subcellularLocation>
</comment>
<comment type="similarity">
    <text evidence="1">Belongs to the IraP family.</text>
</comment>
<comment type="sequence caution" evidence="2">
    <conflict type="erroneous initiation">
        <sequence resource="EMBL-CDS" id="ABU78152"/>
    </conflict>
</comment>
<protein>
    <recommendedName>
        <fullName evidence="1">Anti-adapter protein IraP</fullName>
    </recommendedName>
</protein>
<accession>A7MLV0</accession>
<dbReference type="EMBL" id="CP000783">
    <property type="protein sequence ID" value="ABU78152.1"/>
    <property type="status" value="ALT_INIT"/>
    <property type="molecule type" value="Genomic_DNA"/>
</dbReference>
<dbReference type="RefSeq" id="WP_004386850.1">
    <property type="nucleotide sequence ID" value="NC_009778.1"/>
</dbReference>
<dbReference type="SMR" id="A7MLV0"/>
<dbReference type="GeneID" id="56731705"/>
<dbReference type="KEGG" id="esa:ESA_02923"/>
<dbReference type="HOGENOM" id="CLU_169517_0_0_6"/>
<dbReference type="Proteomes" id="UP000000260">
    <property type="component" value="Chromosome"/>
</dbReference>
<dbReference type="GO" id="GO:0005737">
    <property type="term" value="C:cytoplasm"/>
    <property type="evidence" value="ECO:0007669"/>
    <property type="project" value="UniProtKB-SubCell"/>
</dbReference>
<dbReference type="GO" id="GO:0009267">
    <property type="term" value="P:cellular response to starvation"/>
    <property type="evidence" value="ECO:0007669"/>
    <property type="project" value="UniProtKB-UniRule"/>
</dbReference>
<dbReference type="HAMAP" id="MF_01198">
    <property type="entry name" value="Anti_adapt_IraP"/>
    <property type="match status" value="1"/>
</dbReference>
<dbReference type="InterPro" id="IPR019732">
    <property type="entry name" value="SigmaS_Anti-adapt_IraP"/>
</dbReference>
<dbReference type="NCBIfam" id="NF007598">
    <property type="entry name" value="PRK10244.1"/>
    <property type="match status" value="1"/>
</dbReference>
<dbReference type="Pfam" id="PF10796">
    <property type="entry name" value="Anti-adapt_IraP"/>
    <property type="match status" value="1"/>
</dbReference>
<organism>
    <name type="scientific">Cronobacter sakazakii (strain ATCC BAA-894)</name>
    <name type="common">Enterobacter sakazakii</name>
    <dbReference type="NCBI Taxonomy" id="290339"/>
    <lineage>
        <taxon>Bacteria</taxon>
        <taxon>Pseudomonadati</taxon>
        <taxon>Pseudomonadota</taxon>
        <taxon>Gammaproteobacteria</taxon>
        <taxon>Enterobacterales</taxon>
        <taxon>Enterobacteriaceae</taxon>
        <taxon>Cronobacter</taxon>
    </lineage>
</organism>
<sequence length="86" mass="9695">MKNLIAELLVKLAEKEEESKELVAQVEALEIVVTALLRHLDPNTQQTLIASVEGALEGVQPESNVPQRDTELLQQYVKKLLRHPRT</sequence>
<feature type="chain" id="PRO_0000337848" description="Anti-adapter protein IraP">
    <location>
        <begin position="1"/>
        <end position="86"/>
    </location>
</feature>
<feature type="coiled-coil region" evidence="1">
    <location>
        <begin position="1"/>
        <end position="36"/>
    </location>
</feature>
<reference key="1">
    <citation type="journal article" date="2010" name="PLoS ONE">
        <title>Genome sequence of Cronobacter sakazakii BAA-894 and comparative genomic hybridization analysis with other Cronobacter species.</title>
        <authorList>
            <person name="Kucerova E."/>
            <person name="Clifton S.W."/>
            <person name="Xia X.Q."/>
            <person name="Long F."/>
            <person name="Porwollik S."/>
            <person name="Fulton L."/>
            <person name="Fronick C."/>
            <person name="Minx P."/>
            <person name="Kyung K."/>
            <person name="Warren W."/>
            <person name="Fulton R."/>
            <person name="Feng D."/>
            <person name="Wollam A."/>
            <person name="Shah N."/>
            <person name="Bhonagiri V."/>
            <person name="Nash W.E."/>
            <person name="Hallsworth-Pepin K."/>
            <person name="Wilson R.K."/>
            <person name="McClelland M."/>
            <person name="Forsythe S.J."/>
        </authorList>
    </citation>
    <scope>NUCLEOTIDE SEQUENCE [LARGE SCALE GENOMIC DNA]</scope>
    <source>
        <strain>ATCC BAA-894</strain>
    </source>
</reference>
<name>IRAP_CROS8</name>
<gene>
    <name evidence="1" type="primary">iraP</name>
    <name type="ordered locus">ESA_02923</name>
</gene>